<accession>Q0HNT1</accession>
<sequence length="230" mass="25755">MGQKVHPNGIRLGITKPWISTWYADKSDYANNLNSDWEVRKYLADKLQAASVSKIVIERPAKSIRVTIHTARPGVVIGKKGEDVEVLRAAVSKLAGTPAQINIAEIRKPELDAKLVADSIAQQLERRVMFRRAMKRAVQNAMRIGAQGIKVEVSGRLGGAEIARSEWYREGRVPLHTLRADIDYSTSESHTQYGVIGIKVWIFKGEVLDGMLPQIEEPKQQQPKRKPRGK</sequence>
<keyword id="KW-0687">Ribonucleoprotein</keyword>
<keyword id="KW-0689">Ribosomal protein</keyword>
<keyword id="KW-0694">RNA-binding</keyword>
<keyword id="KW-0699">rRNA-binding</keyword>
<proteinExistence type="inferred from homology"/>
<name>RS3_SHESM</name>
<gene>
    <name evidence="1" type="primary">rpsC</name>
    <name type="ordered locus">Shewmr4_0205</name>
</gene>
<organism>
    <name type="scientific">Shewanella sp. (strain MR-4)</name>
    <dbReference type="NCBI Taxonomy" id="60480"/>
    <lineage>
        <taxon>Bacteria</taxon>
        <taxon>Pseudomonadati</taxon>
        <taxon>Pseudomonadota</taxon>
        <taxon>Gammaproteobacteria</taxon>
        <taxon>Alteromonadales</taxon>
        <taxon>Shewanellaceae</taxon>
        <taxon>Shewanella</taxon>
    </lineage>
</organism>
<dbReference type="EMBL" id="CP000446">
    <property type="protein sequence ID" value="ABI37286.1"/>
    <property type="molecule type" value="Genomic_DNA"/>
</dbReference>
<dbReference type="RefSeq" id="WP_011070621.1">
    <property type="nucleotide sequence ID" value="NC_008321.1"/>
</dbReference>
<dbReference type="SMR" id="Q0HNT1"/>
<dbReference type="GeneID" id="94726192"/>
<dbReference type="KEGG" id="she:Shewmr4_0205"/>
<dbReference type="HOGENOM" id="CLU_058591_0_2_6"/>
<dbReference type="GO" id="GO:0022627">
    <property type="term" value="C:cytosolic small ribosomal subunit"/>
    <property type="evidence" value="ECO:0007669"/>
    <property type="project" value="TreeGrafter"/>
</dbReference>
<dbReference type="GO" id="GO:0003729">
    <property type="term" value="F:mRNA binding"/>
    <property type="evidence" value="ECO:0007669"/>
    <property type="project" value="UniProtKB-UniRule"/>
</dbReference>
<dbReference type="GO" id="GO:0019843">
    <property type="term" value="F:rRNA binding"/>
    <property type="evidence" value="ECO:0007669"/>
    <property type="project" value="UniProtKB-UniRule"/>
</dbReference>
<dbReference type="GO" id="GO:0003735">
    <property type="term" value="F:structural constituent of ribosome"/>
    <property type="evidence" value="ECO:0007669"/>
    <property type="project" value="InterPro"/>
</dbReference>
<dbReference type="GO" id="GO:0006412">
    <property type="term" value="P:translation"/>
    <property type="evidence" value="ECO:0007669"/>
    <property type="project" value="UniProtKB-UniRule"/>
</dbReference>
<dbReference type="CDD" id="cd02412">
    <property type="entry name" value="KH-II_30S_S3"/>
    <property type="match status" value="1"/>
</dbReference>
<dbReference type="FunFam" id="3.30.1140.32:FF:000001">
    <property type="entry name" value="30S ribosomal protein S3"/>
    <property type="match status" value="1"/>
</dbReference>
<dbReference type="FunFam" id="3.30.300.20:FF:000001">
    <property type="entry name" value="30S ribosomal protein S3"/>
    <property type="match status" value="1"/>
</dbReference>
<dbReference type="Gene3D" id="3.30.300.20">
    <property type="match status" value="1"/>
</dbReference>
<dbReference type="Gene3D" id="3.30.1140.32">
    <property type="entry name" value="Ribosomal protein S3, C-terminal domain"/>
    <property type="match status" value="1"/>
</dbReference>
<dbReference type="HAMAP" id="MF_01309_B">
    <property type="entry name" value="Ribosomal_uS3_B"/>
    <property type="match status" value="1"/>
</dbReference>
<dbReference type="InterPro" id="IPR004087">
    <property type="entry name" value="KH_dom"/>
</dbReference>
<dbReference type="InterPro" id="IPR015946">
    <property type="entry name" value="KH_dom-like_a/b"/>
</dbReference>
<dbReference type="InterPro" id="IPR004044">
    <property type="entry name" value="KH_dom_type_2"/>
</dbReference>
<dbReference type="InterPro" id="IPR009019">
    <property type="entry name" value="KH_sf_prok-type"/>
</dbReference>
<dbReference type="InterPro" id="IPR036419">
    <property type="entry name" value="Ribosomal_S3_C_sf"/>
</dbReference>
<dbReference type="InterPro" id="IPR005704">
    <property type="entry name" value="Ribosomal_uS3_bac-typ"/>
</dbReference>
<dbReference type="InterPro" id="IPR001351">
    <property type="entry name" value="Ribosomal_uS3_C"/>
</dbReference>
<dbReference type="InterPro" id="IPR018280">
    <property type="entry name" value="Ribosomal_uS3_CS"/>
</dbReference>
<dbReference type="NCBIfam" id="TIGR01009">
    <property type="entry name" value="rpsC_bact"/>
    <property type="match status" value="1"/>
</dbReference>
<dbReference type="PANTHER" id="PTHR11760">
    <property type="entry name" value="30S/40S RIBOSOMAL PROTEIN S3"/>
    <property type="match status" value="1"/>
</dbReference>
<dbReference type="PANTHER" id="PTHR11760:SF19">
    <property type="entry name" value="SMALL RIBOSOMAL SUBUNIT PROTEIN US3C"/>
    <property type="match status" value="1"/>
</dbReference>
<dbReference type="Pfam" id="PF07650">
    <property type="entry name" value="KH_2"/>
    <property type="match status" value="1"/>
</dbReference>
<dbReference type="Pfam" id="PF00189">
    <property type="entry name" value="Ribosomal_S3_C"/>
    <property type="match status" value="1"/>
</dbReference>
<dbReference type="SMART" id="SM00322">
    <property type="entry name" value="KH"/>
    <property type="match status" value="1"/>
</dbReference>
<dbReference type="SUPFAM" id="SSF54814">
    <property type="entry name" value="Prokaryotic type KH domain (KH-domain type II)"/>
    <property type="match status" value="1"/>
</dbReference>
<dbReference type="SUPFAM" id="SSF54821">
    <property type="entry name" value="Ribosomal protein S3 C-terminal domain"/>
    <property type="match status" value="1"/>
</dbReference>
<dbReference type="PROSITE" id="PS50823">
    <property type="entry name" value="KH_TYPE_2"/>
    <property type="match status" value="1"/>
</dbReference>
<dbReference type="PROSITE" id="PS00548">
    <property type="entry name" value="RIBOSOMAL_S3"/>
    <property type="match status" value="1"/>
</dbReference>
<protein>
    <recommendedName>
        <fullName evidence="1">Small ribosomal subunit protein uS3</fullName>
    </recommendedName>
    <alternativeName>
        <fullName evidence="2">30S ribosomal protein S3</fullName>
    </alternativeName>
</protein>
<feature type="chain" id="PRO_0000293883" description="Small ribosomal subunit protein uS3">
    <location>
        <begin position="1"/>
        <end position="230"/>
    </location>
</feature>
<feature type="domain" description="KH type-2" evidence="1">
    <location>
        <begin position="39"/>
        <end position="107"/>
    </location>
</feature>
<comment type="function">
    <text evidence="1">Binds the lower part of the 30S subunit head. Binds mRNA in the 70S ribosome, positioning it for translation.</text>
</comment>
<comment type="subunit">
    <text evidence="1">Part of the 30S ribosomal subunit. Forms a tight complex with proteins S10 and S14.</text>
</comment>
<comment type="similarity">
    <text evidence="1">Belongs to the universal ribosomal protein uS3 family.</text>
</comment>
<evidence type="ECO:0000255" key="1">
    <source>
        <dbReference type="HAMAP-Rule" id="MF_01309"/>
    </source>
</evidence>
<evidence type="ECO:0000305" key="2"/>
<reference key="1">
    <citation type="submission" date="2006-08" db="EMBL/GenBank/DDBJ databases">
        <title>Complete sequence of Shewanella sp. MR-4.</title>
        <authorList>
            <consortium name="US DOE Joint Genome Institute"/>
            <person name="Copeland A."/>
            <person name="Lucas S."/>
            <person name="Lapidus A."/>
            <person name="Barry K."/>
            <person name="Detter J.C."/>
            <person name="Glavina del Rio T."/>
            <person name="Hammon N."/>
            <person name="Israni S."/>
            <person name="Dalin E."/>
            <person name="Tice H."/>
            <person name="Pitluck S."/>
            <person name="Kiss H."/>
            <person name="Brettin T."/>
            <person name="Bruce D."/>
            <person name="Han C."/>
            <person name="Tapia R."/>
            <person name="Gilna P."/>
            <person name="Schmutz J."/>
            <person name="Larimer F."/>
            <person name="Land M."/>
            <person name="Hauser L."/>
            <person name="Kyrpides N."/>
            <person name="Mikhailova N."/>
            <person name="Nealson K."/>
            <person name="Konstantinidis K."/>
            <person name="Klappenbach J."/>
            <person name="Tiedje J."/>
            <person name="Richardson P."/>
        </authorList>
    </citation>
    <scope>NUCLEOTIDE SEQUENCE [LARGE SCALE GENOMIC DNA]</scope>
    <source>
        <strain>MR-4</strain>
    </source>
</reference>